<proteinExistence type="evidence at transcript level"/>
<sequence>MSTVYYPSVILKKSPLPLKLTPARASGNFGTPITAALQRASFNITIITRTESSSTFPAGLPIIRTSYTLENLTTALAGQDAAICVVGPGGIGAQVLMIEAAEAAGVKRFIVDDFGWGPGFRNLPEFRAIHAHRRAGWELAKAKAQANPNFTFTGITSGNPIDWAMKRFPLMGFDIARCSAIIYDSGTEKFTATTLAGIGQSVVGVLQHPDETANRFVKVLSIITNQNELLEAFQRVTGRQWPVQRASAQTLIESGQQKFQAGMGGWVLELVVAQMYDEGEARCVMAPSWEASDSPLLGVKKESADEVVAKVLQL</sequence>
<dbReference type="EC" id="1.3.1.-" evidence="4"/>
<dbReference type="EMBL" id="KB644411">
    <property type="protein sequence ID" value="EPS29072.1"/>
    <property type="molecule type" value="Genomic_DNA"/>
</dbReference>
<dbReference type="SMR" id="S8B3I4"/>
<dbReference type="STRING" id="933388.S8B3I4"/>
<dbReference type="eggNOG" id="ENOG502SM3M">
    <property type="taxonomic scope" value="Eukaryota"/>
</dbReference>
<dbReference type="HOGENOM" id="CLU_044876_3_3_1"/>
<dbReference type="OrthoDB" id="9974981at2759"/>
<dbReference type="PhylomeDB" id="S8B3I4"/>
<dbReference type="Proteomes" id="UP000019376">
    <property type="component" value="Unassembled WGS sequence"/>
</dbReference>
<dbReference type="GO" id="GO:0016491">
    <property type="term" value="F:oxidoreductase activity"/>
    <property type="evidence" value="ECO:0007669"/>
    <property type="project" value="UniProtKB-KW"/>
</dbReference>
<dbReference type="CDD" id="cd05259">
    <property type="entry name" value="PCBER_SDR_a"/>
    <property type="match status" value="1"/>
</dbReference>
<dbReference type="Gene3D" id="3.40.50.720">
    <property type="entry name" value="NAD(P)-binding Rossmann-like Domain"/>
    <property type="match status" value="1"/>
</dbReference>
<dbReference type="Gene3D" id="3.90.25.10">
    <property type="entry name" value="UDP-galactose 4-epimerase, domain 1"/>
    <property type="match status" value="1"/>
</dbReference>
<dbReference type="InterPro" id="IPR016040">
    <property type="entry name" value="NAD(P)-bd_dom"/>
</dbReference>
<dbReference type="InterPro" id="IPR036291">
    <property type="entry name" value="NAD(P)-bd_dom_sf"/>
</dbReference>
<dbReference type="InterPro" id="IPR051609">
    <property type="entry name" value="NmrA/Isoflavone_reductase-like"/>
</dbReference>
<dbReference type="InterPro" id="IPR045312">
    <property type="entry name" value="PCBER-like"/>
</dbReference>
<dbReference type="PANTHER" id="PTHR47706:SF9">
    <property type="entry name" value="NMRA-LIKE DOMAIN-CONTAINING PROTEIN-RELATED"/>
    <property type="match status" value="1"/>
</dbReference>
<dbReference type="PANTHER" id="PTHR47706">
    <property type="entry name" value="NMRA-LIKE FAMILY PROTEIN"/>
    <property type="match status" value="1"/>
</dbReference>
<dbReference type="Pfam" id="PF13460">
    <property type="entry name" value="NAD_binding_10"/>
    <property type="match status" value="1"/>
</dbReference>
<dbReference type="SUPFAM" id="SSF51735">
    <property type="entry name" value="NAD(P)-binding Rossmann-fold domains"/>
    <property type="match status" value="1"/>
</dbReference>
<accession>S8B3I4</accession>
<name>POXI_PENO1</name>
<organism>
    <name type="scientific">Penicillium oxalicum (strain 114-2 / CGMCC 5302)</name>
    <name type="common">Penicillium decumbens</name>
    <dbReference type="NCBI Taxonomy" id="933388"/>
    <lineage>
        <taxon>Eukaryota</taxon>
        <taxon>Fungi</taxon>
        <taxon>Dikarya</taxon>
        <taxon>Ascomycota</taxon>
        <taxon>Pezizomycotina</taxon>
        <taxon>Eurotiomycetes</taxon>
        <taxon>Eurotiomycetidae</taxon>
        <taxon>Eurotiales</taxon>
        <taxon>Aspergillaceae</taxon>
        <taxon>Penicillium</taxon>
    </lineage>
</organism>
<reference key="1">
    <citation type="journal article" date="2013" name="PLoS ONE">
        <title>Genomic and secretomic analyses reveal unique features of the lignocellulolytic enzyme system of Penicillium decumbens.</title>
        <authorList>
            <person name="Liu G."/>
            <person name="Zhang L."/>
            <person name="Wei X."/>
            <person name="Zou G."/>
            <person name="Qin Y."/>
            <person name="Ma L."/>
            <person name="Li J."/>
            <person name="Zheng H."/>
            <person name="Wang S."/>
            <person name="Wang C."/>
            <person name="Xun L."/>
            <person name="Zhao G.-P."/>
            <person name="Zhou Z."/>
            <person name="Qu Y."/>
        </authorList>
    </citation>
    <scope>NUCLEOTIDE SEQUENCE [LARGE SCALE GENOMIC DNA]</scope>
    <source>
        <strain>114-2 / CGMCC 5302</strain>
    </source>
</reference>
<reference key="2">
    <citation type="journal article" date="2017" name="J. Am. Chem. Soc.">
        <title>Collaborative Biosynthesis of Maleimide- and Succinimide-Containing Natural Products by Fungal Polyketide Megasynthases.</title>
        <authorList>
            <person name="Sato M."/>
            <person name="Dander J.E."/>
            <person name="Sato C."/>
            <person name="Hung Y.S."/>
            <person name="Gao S.S."/>
            <person name="Tang M.C."/>
            <person name="Hang L."/>
            <person name="Winter J.M."/>
            <person name="Garg N.K."/>
            <person name="Watanabe K."/>
            <person name="Tang Y."/>
        </authorList>
    </citation>
    <scope>FUNCTION</scope>
    <scope>INDUCTION</scope>
    <scope>PATHWAY</scope>
</reference>
<reference key="3">
    <citation type="journal article" date="2020" name="Chem. Commun. (Camb.)">
        <title>Evidence for enzyme catalysed intramolecular [4+2] Diels-Alder cyclization during the biosynthesis of pyrichalasin H.</title>
        <authorList>
            <person name="Hantke V."/>
            <person name="Skellam E.J."/>
            <person name="Cox R.J."/>
        </authorList>
    </citation>
    <scope>FUNCTION</scope>
</reference>
<protein>
    <recommendedName>
        <fullName evidence="2">Oxidoreductase poxI</fullName>
        <ecNumber evidence="4">1.3.1.-</ecNumber>
    </recommendedName>
    <alternativeName>
        <fullName evidence="2">Oxaleimides biosynthesis cluster protein I</fullName>
    </alternativeName>
</protein>
<keyword id="KW-0521">NADP</keyword>
<keyword id="KW-0560">Oxidoreductase</keyword>
<keyword id="KW-1185">Reference proteome</keyword>
<feature type="chain" id="PRO_0000453772" description="Oxidoreductase poxI">
    <location>
        <begin position="1"/>
        <end position="314"/>
    </location>
</feature>
<comment type="function">
    <text evidence="1 5">Oxidoreductase; part of the gene cluster that mediates the biosynthesis of oxaleimides, cytotoxic compounds containing an unusual disubstituted succinimide moiety (PubMed:28365998). The first step of the pathway is provided by the HR-PKS poxF that serves in a new mode of collaborative biosynthesis with the PKS-NRPS poxE, by providing the olefin containing amino acid substrate via the synthesis of an ACP-bound dec-4-enoate (PubMed:28365998). The cytochrome P450 monooxygenase poxM-catalyzed oxidation at the alpha-position creates the enzyme-bound 2-hydroxydec-4-enoyl-ACP thioester, which may be prone to spontaneous hydrolysis to yield 2-hydroxydec-4-enoic acid due to increased electrophilicity of the carbonyl (PubMed:28365998). 2-hydroxydec-4-enoic acid can then be further oxidized by poxM to yield the alpha-ketoacid 2-oxodec-4-enoicacid, which is reductively aminated by the aminotransferase poxL to yield (S,E)-2-aminodec-4-enoic acid (PubMed:28365998). The Hybrid PKS-NRPS synthetase poxE then performs condensation between the octaketide product of its PKS modules and the amino group of (S,E)-2-aminodec-4-enoic acid which is activated and incorporated by the adenylation domain (PubMed:28365998). The resulting aminoacyl product can be cyclized by the Diels-Alderase PoxQ and reductively released by the reductive (R) domain of poxE to yield an aldehyde intermediate (Probable) (PubMed:28365998). The released aldehyde is then substrate for a Knoevenagel condensation by the hydrolyase poxO followed by an oxidation at the 5-position of the pyrrolidone ring (PubMed:28365998). The presence of the olefin from the amino acid building block allows for migration of the substituted allyl group to occur (PubMed:28365998). This allylic transposition reaction takes place in a conjugate addition, semipinacol-like fashion to yield a succinimide intermediate (PubMed:28365998). Iterative two-electron oxidations of the C7 methyl of the succinimide intermediate to the carboxylic acid can be catalyzed by one of two remaining cytochrome P450 monooxygenasess poxC or poxD to yield oxaleimide A (PubMed:28365998). Subsequent oxidation yields the maleimide scaffold oxaleimide I (PubMed:28365998). Both oxaleimide A and oxaleimide I can undergo oxidative modifications in the decalin ring to yield the series of products oxaleimides B to H (PubMed:28365998).</text>
</comment>
<comment type="pathway">
    <text evidence="4">Secondary metabolite biosynthesis.</text>
</comment>
<comment type="induction">
    <text evidence="1">Expression is positively regulated by the oxaleimides biosynthesis cluster-specific transcription factor poxB.</text>
</comment>
<comment type="similarity">
    <text evidence="3">Belongs to the NmrA-type oxidoreductase family. Isoflavone reductase subfamily.</text>
</comment>
<gene>
    <name evidence="2" type="primary">poxI</name>
    <name type="ORF">PDE_04021</name>
</gene>
<evidence type="ECO:0000269" key="1">
    <source>
    </source>
</evidence>
<evidence type="ECO:0000303" key="2">
    <source>
    </source>
</evidence>
<evidence type="ECO:0000305" key="3"/>
<evidence type="ECO:0000305" key="4">
    <source>
    </source>
</evidence>
<evidence type="ECO:0000305" key="5">
    <source>
    </source>
</evidence>